<keyword id="KW-0963">Cytoplasm</keyword>
<keyword id="KW-0238">DNA-binding</keyword>
<keyword id="KW-0804">Transcription</keyword>
<keyword id="KW-0805">Transcription regulation</keyword>
<protein>
    <recommendedName>
        <fullName evidence="1">Probable transcriptional regulatory protein ABSDF2152</fullName>
    </recommendedName>
</protein>
<reference key="1">
    <citation type="journal article" date="2008" name="PLoS ONE">
        <title>Comparative analysis of Acinetobacters: three genomes for three lifestyles.</title>
        <authorList>
            <person name="Vallenet D."/>
            <person name="Nordmann P."/>
            <person name="Barbe V."/>
            <person name="Poirel L."/>
            <person name="Mangenot S."/>
            <person name="Bataille E."/>
            <person name="Dossat C."/>
            <person name="Gas S."/>
            <person name="Kreimeyer A."/>
            <person name="Lenoble P."/>
            <person name="Oztas S."/>
            <person name="Poulain J."/>
            <person name="Segurens B."/>
            <person name="Robert C."/>
            <person name="Abergel C."/>
            <person name="Claverie J.-M."/>
            <person name="Raoult D."/>
            <person name="Medigue C."/>
            <person name="Weissenbach J."/>
            <person name="Cruveiller S."/>
        </authorList>
    </citation>
    <scope>NUCLEOTIDE SEQUENCE [LARGE SCALE GENOMIC DNA]</scope>
    <source>
        <strain>SDF</strain>
    </source>
</reference>
<feature type="chain" id="PRO_1000132138" description="Probable transcriptional regulatory protein ABSDF2152">
    <location>
        <begin position="1"/>
        <end position="249"/>
    </location>
</feature>
<evidence type="ECO:0000255" key="1">
    <source>
        <dbReference type="HAMAP-Rule" id="MF_00693"/>
    </source>
</evidence>
<name>Y2152_ACIBS</name>
<comment type="subcellular location">
    <subcellularLocation>
        <location evidence="1">Cytoplasm</location>
    </subcellularLocation>
</comment>
<comment type="similarity">
    <text evidence="1">Belongs to the TACO1 family.</text>
</comment>
<gene>
    <name type="ordered locus">ABSDF2152</name>
</gene>
<dbReference type="EMBL" id="CU468230">
    <property type="protein sequence ID" value="CAP01477.1"/>
    <property type="molecule type" value="Genomic_DNA"/>
</dbReference>
<dbReference type="SMR" id="B0VR58"/>
<dbReference type="KEGG" id="abm:ABSDF2152"/>
<dbReference type="HOGENOM" id="CLU_062974_2_2_6"/>
<dbReference type="BioCyc" id="ABAU509170:GCL9-1752-MONOMER"/>
<dbReference type="Proteomes" id="UP000001741">
    <property type="component" value="Chromosome"/>
</dbReference>
<dbReference type="GO" id="GO:0005829">
    <property type="term" value="C:cytosol"/>
    <property type="evidence" value="ECO:0007669"/>
    <property type="project" value="TreeGrafter"/>
</dbReference>
<dbReference type="GO" id="GO:0003677">
    <property type="term" value="F:DNA binding"/>
    <property type="evidence" value="ECO:0007669"/>
    <property type="project" value="UniProtKB-UniRule"/>
</dbReference>
<dbReference type="GO" id="GO:0006355">
    <property type="term" value="P:regulation of DNA-templated transcription"/>
    <property type="evidence" value="ECO:0007669"/>
    <property type="project" value="UniProtKB-UniRule"/>
</dbReference>
<dbReference type="FunFam" id="1.10.10.200:FF:000001">
    <property type="entry name" value="Probable transcriptional regulatory protein YebC"/>
    <property type="match status" value="1"/>
</dbReference>
<dbReference type="FunFam" id="3.30.70.980:FF:000002">
    <property type="entry name" value="Probable transcriptional regulatory protein YebC"/>
    <property type="match status" value="1"/>
</dbReference>
<dbReference type="Gene3D" id="1.10.10.200">
    <property type="match status" value="1"/>
</dbReference>
<dbReference type="Gene3D" id="3.30.70.980">
    <property type="match status" value="2"/>
</dbReference>
<dbReference type="HAMAP" id="MF_00693">
    <property type="entry name" value="Transcrip_reg_TACO1"/>
    <property type="match status" value="1"/>
</dbReference>
<dbReference type="InterPro" id="IPR017856">
    <property type="entry name" value="Integrase-like_N"/>
</dbReference>
<dbReference type="InterPro" id="IPR048300">
    <property type="entry name" value="TACO1_YebC-like_2nd/3rd_dom"/>
</dbReference>
<dbReference type="InterPro" id="IPR049083">
    <property type="entry name" value="TACO1_YebC_N"/>
</dbReference>
<dbReference type="InterPro" id="IPR002876">
    <property type="entry name" value="Transcrip_reg_TACO1-like"/>
</dbReference>
<dbReference type="InterPro" id="IPR026564">
    <property type="entry name" value="Transcrip_reg_TACO1-like_dom3"/>
</dbReference>
<dbReference type="InterPro" id="IPR029072">
    <property type="entry name" value="YebC-like"/>
</dbReference>
<dbReference type="NCBIfam" id="NF001030">
    <property type="entry name" value="PRK00110.1"/>
    <property type="match status" value="1"/>
</dbReference>
<dbReference type="NCBIfam" id="NF009044">
    <property type="entry name" value="PRK12378.1"/>
    <property type="match status" value="1"/>
</dbReference>
<dbReference type="NCBIfam" id="TIGR01033">
    <property type="entry name" value="YebC/PmpR family DNA-binding transcriptional regulator"/>
    <property type="match status" value="1"/>
</dbReference>
<dbReference type="PANTHER" id="PTHR12532:SF6">
    <property type="entry name" value="TRANSCRIPTIONAL REGULATORY PROTEIN YEBC-RELATED"/>
    <property type="match status" value="1"/>
</dbReference>
<dbReference type="PANTHER" id="PTHR12532">
    <property type="entry name" value="TRANSLATIONAL ACTIVATOR OF CYTOCHROME C OXIDASE 1"/>
    <property type="match status" value="1"/>
</dbReference>
<dbReference type="Pfam" id="PF20772">
    <property type="entry name" value="TACO1_YebC_N"/>
    <property type="match status" value="1"/>
</dbReference>
<dbReference type="Pfam" id="PF01709">
    <property type="entry name" value="Transcrip_reg"/>
    <property type="match status" value="1"/>
</dbReference>
<dbReference type="SUPFAM" id="SSF75625">
    <property type="entry name" value="YebC-like"/>
    <property type="match status" value="1"/>
</dbReference>
<proteinExistence type="inferred from homology"/>
<sequence length="249" mass="27012">MAGHSKWANIKHRKAKQDASRGKVFTKYIREIVTAAKLGGADPASNPRLRAVVEKALSVNMTRDTINRAIQRGVGGEDNDDLKEVTYEGYGVGGVAVLVETMTDNLNRTVPDVRHCFSKTNGNLGTAGSVAYLFTKRGEITFDDVSLEDKIMDVALEAGAEDIEVSEDEILVITSPETFGEVQDALAAAGLKSDNAEVVMSPSTKAEITDIDQAKQVMKLIDMLEDLDDVQNVYTNVEFSDEVLAQLDA</sequence>
<accession>B0VR58</accession>
<organism>
    <name type="scientific">Acinetobacter baumannii (strain SDF)</name>
    <dbReference type="NCBI Taxonomy" id="509170"/>
    <lineage>
        <taxon>Bacteria</taxon>
        <taxon>Pseudomonadati</taxon>
        <taxon>Pseudomonadota</taxon>
        <taxon>Gammaproteobacteria</taxon>
        <taxon>Moraxellales</taxon>
        <taxon>Moraxellaceae</taxon>
        <taxon>Acinetobacter</taxon>
        <taxon>Acinetobacter calcoaceticus/baumannii complex</taxon>
    </lineage>
</organism>